<sequence length="85" mass="8648">MENLGDLAQGLALLGKYLGAGLCMGIGAIGPGIGEGNIGAHAMDAMARQPEMVGTITTRMLLADAVAETTGIYSLLIAFMILLVV</sequence>
<keyword id="KW-0066">ATP synthesis</keyword>
<keyword id="KW-0997">Cell inner membrane</keyword>
<keyword id="KW-1003">Cell membrane</keyword>
<keyword id="KW-0138">CF(0)</keyword>
<keyword id="KW-0375">Hydrogen ion transport</keyword>
<keyword id="KW-0406">Ion transport</keyword>
<keyword id="KW-0446">Lipid-binding</keyword>
<keyword id="KW-0472">Membrane</keyword>
<keyword id="KW-0812">Transmembrane</keyword>
<keyword id="KW-1133">Transmembrane helix</keyword>
<keyword id="KW-0813">Transport</keyword>
<comment type="function">
    <text evidence="1">F(1)F(0) ATP synthase produces ATP from ADP in the presence of a proton or sodium gradient. F-type ATPases consist of two structural domains, F(1) containing the extramembraneous catalytic core and F(0) containing the membrane proton channel, linked together by a central stalk and a peripheral stalk. During catalysis, ATP synthesis in the catalytic domain of F(1) is coupled via a rotary mechanism of the central stalk subunits to proton translocation.</text>
</comment>
<comment type="function">
    <text evidence="1">Key component of the F(0) channel; it plays a direct role in translocation across the membrane. A homomeric c-ring of between 10-14 subunits forms the central stalk rotor element with the F(1) delta and epsilon subunits.</text>
</comment>
<comment type="subunit">
    <text evidence="1">F-type ATPases have 2 components, F(1) - the catalytic core - and F(0) - the membrane proton channel. F(1) has five subunits: alpha(3), beta(3), gamma(1), delta(1), epsilon(1). F(0) has three main subunits: a(1), b(2) and c(10-14). The alpha and beta chains form an alternating ring which encloses part of the gamma chain. F(1) is attached to F(0) by a central stalk formed by the gamma and epsilon chains, while a peripheral stalk is formed by the delta and b chains.</text>
</comment>
<comment type="subcellular location">
    <subcellularLocation>
        <location evidence="1">Cell inner membrane</location>
        <topology evidence="1">Multi-pass membrane protein</topology>
    </subcellularLocation>
</comment>
<comment type="similarity">
    <text evidence="1">Belongs to the ATPase C chain family.</text>
</comment>
<proteinExistence type="inferred from homology"/>
<accession>A5ILW7</accession>
<reference key="1">
    <citation type="submission" date="2007-05" db="EMBL/GenBank/DDBJ databases">
        <title>Complete sequence of Thermotoga petrophila RKU-1.</title>
        <authorList>
            <consortium name="US DOE Joint Genome Institute"/>
            <person name="Copeland A."/>
            <person name="Lucas S."/>
            <person name="Lapidus A."/>
            <person name="Barry K."/>
            <person name="Glavina del Rio T."/>
            <person name="Dalin E."/>
            <person name="Tice H."/>
            <person name="Pitluck S."/>
            <person name="Sims D."/>
            <person name="Brettin T."/>
            <person name="Bruce D."/>
            <person name="Detter J.C."/>
            <person name="Han C."/>
            <person name="Tapia R."/>
            <person name="Schmutz J."/>
            <person name="Larimer F."/>
            <person name="Land M."/>
            <person name="Hauser L."/>
            <person name="Kyrpides N."/>
            <person name="Mikhailova N."/>
            <person name="Nelson K."/>
            <person name="Gogarten J.P."/>
            <person name="Noll K."/>
            <person name="Richardson P."/>
        </authorList>
    </citation>
    <scope>NUCLEOTIDE SEQUENCE [LARGE SCALE GENOMIC DNA]</scope>
    <source>
        <strain>ATCC BAA-488 / DSM 13995 / JCM 10881 / RKU-1</strain>
    </source>
</reference>
<evidence type="ECO:0000255" key="1">
    <source>
        <dbReference type="HAMAP-Rule" id="MF_01396"/>
    </source>
</evidence>
<gene>
    <name evidence="1" type="primary">atpE</name>
    <name type="ordered locus">Tpet_1176</name>
</gene>
<protein>
    <recommendedName>
        <fullName evidence="1">ATP synthase subunit c</fullName>
    </recommendedName>
    <alternativeName>
        <fullName evidence="1">ATP synthase F(0) sector subunit c</fullName>
    </alternativeName>
    <alternativeName>
        <fullName evidence="1">F-type ATPase subunit c</fullName>
        <shortName evidence="1">F-ATPase subunit c</shortName>
    </alternativeName>
    <alternativeName>
        <fullName evidence="1">Lipid-binding protein</fullName>
    </alternativeName>
</protein>
<dbReference type="EMBL" id="CP000702">
    <property type="protein sequence ID" value="ABQ47190.1"/>
    <property type="molecule type" value="Genomic_DNA"/>
</dbReference>
<dbReference type="RefSeq" id="WP_004082074.1">
    <property type="nucleotide sequence ID" value="NC_009486.1"/>
</dbReference>
<dbReference type="SMR" id="A5ILW7"/>
<dbReference type="STRING" id="390874.Tpet_1176"/>
<dbReference type="KEGG" id="tpt:Tpet_1176"/>
<dbReference type="eggNOG" id="COG0636">
    <property type="taxonomic scope" value="Bacteria"/>
</dbReference>
<dbReference type="HOGENOM" id="CLU_148047_2_1_0"/>
<dbReference type="Proteomes" id="UP000006558">
    <property type="component" value="Chromosome"/>
</dbReference>
<dbReference type="GO" id="GO:0005886">
    <property type="term" value="C:plasma membrane"/>
    <property type="evidence" value="ECO:0007669"/>
    <property type="project" value="UniProtKB-SubCell"/>
</dbReference>
<dbReference type="GO" id="GO:0045259">
    <property type="term" value="C:proton-transporting ATP synthase complex"/>
    <property type="evidence" value="ECO:0007669"/>
    <property type="project" value="UniProtKB-KW"/>
</dbReference>
<dbReference type="GO" id="GO:0033177">
    <property type="term" value="C:proton-transporting two-sector ATPase complex, proton-transporting domain"/>
    <property type="evidence" value="ECO:0007669"/>
    <property type="project" value="InterPro"/>
</dbReference>
<dbReference type="GO" id="GO:0008289">
    <property type="term" value="F:lipid binding"/>
    <property type="evidence" value="ECO:0007669"/>
    <property type="project" value="UniProtKB-KW"/>
</dbReference>
<dbReference type="GO" id="GO:0046933">
    <property type="term" value="F:proton-transporting ATP synthase activity, rotational mechanism"/>
    <property type="evidence" value="ECO:0007669"/>
    <property type="project" value="UniProtKB-UniRule"/>
</dbReference>
<dbReference type="CDD" id="cd18121">
    <property type="entry name" value="ATP-synt_Fo_c"/>
    <property type="match status" value="1"/>
</dbReference>
<dbReference type="FunFam" id="1.20.20.10:FF:000019">
    <property type="entry name" value="ATP synthase subunit c"/>
    <property type="match status" value="1"/>
</dbReference>
<dbReference type="Gene3D" id="1.20.20.10">
    <property type="entry name" value="F1F0 ATP synthase subunit C"/>
    <property type="match status" value="1"/>
</dbReference>
<dbReference type="HAMAP" id="MF_01396">
    <property type="entry name" value="ATP_synth_c_bact"/>
    <property type="match status" value="1"/>
</dbReference>
<dbReference type="InterPro" id="IPR005953">
    <property type="entry name" value="ATP_synth_csu_bac/chlpt"/>
</dbReference>
<dbReference type="InterPro" id="IPR000454">
    <property type="entry name" value="ATP_synth_F0_csu"/>
</dbReference>
<dbReference type="InterPro" id="IPR020537">
    <property type="entry name" value="ATP_synth_F0_csu_DDCD_BS"/>
</dbReference>
<dbReference type="InterPro" id="IPR038662">
    <property type="entry name" value="ATP_synth_F0_csu_sf"/>
</dbReference>
<dbReference type="InterPro" id="IPR002379">
    <property type="entry name" value="ATPase_proteolipid_c-like_dom"/>
</dbReference>
<dbReference type="InterPro" id="IPR035921">
    <property type="entry name" value="F/V-ATP_Csub_sf"/>
</dbReference>
<dbReference type="NCBIfam" id="TIGR01260">
    <property type="entry name" value="ATP_synt_c"/>
    <property type="match status" value="1"/>
</dbReference>
<dbReference type="NCBIfam" id="NF009999">
    <property type="entry name" value="PRK13471.1"/>
    <property type="match status" value="1"/>
</dbReference>
<dbReference type="Pfam" id="PF00137">
    <property type="entry name" value="ATP-synt_C"/>
    <property type="match status" value="1"/>
</dbReference>
<dbReference type="PRINTS" id="PR00124">
    <property type="entry name" value="ATPASEC"/>
</dbReference>
<dbReference type="SUPFAM" id="SSF81333">
    <property type="entry name" value="F1F0 ATP synthase subunit C"/>
    <property type="match status" value="1"/>
</dbReference>
<dbReference type="PROSITE" id="PS00605">
    <property type="entry name" value="ATPASE_C"/>
    <property type="match status" value="1"/>
</dbReference>
<name>ATPL_THEP1</name>
<feature type="chain" id="PRO_0000365936" description="ATP synthase subunit c">
    <location>
        <begin position="1"/>
        <end position="85"/>
    </location>
</feature>
<feature type="transmembrane region" description="Helical" evidence="1">
    <location>
        <begin position="10"/>
        <end position="30"/>
    </location>
</feature>
<feature type="transmembrane region" description="Helical" evidence="1">
    <location>
        <begin position="65"/>
        <end position="85"/>
    </location>
</feature>
<feature type="site" description="Reversibly protonated during proton transport" evidence="1">
    <location>
        <position position="68"/>
    </location>
</feature>
<organism>
    <name type="scientific">Thermotoga petrophila (strain ATCC BAA-488 / DSM 13995 / JCM 10881 / RKU-1)</name>
    <dbReference type="NCBI Taxonomy" id="390874"/>
    <lineage>
        <taxon>Bacteria</taxon>
        <taxon>Thermotogati</taxon>
        <taxon>Thermotogota</taxon>
        <taxon>Thermotogae</taxon>
        <taxon>Thermotogales</taxon>
        <taxon>Thermotogaceae</taxon>
        <taxon>Thermotoga</taxon>
    </lineage>
</organism>